<dbReference type="EC" id="3.4.17.-"/>
<dbReference type="EMBL" id="FJ267689">
    <property type="protein sequence ID" value="ACJ06657.1"/>
    <property type="molecule type" value="Genomic_DNA"/>
</dbReference>
<dbReference type="SMR" id="B6V866"/>
<dbReference type="GlyCosmos" id="B6V866">
    <property type="glycosylation" value="3 sites, No reported glycans"/>
</dbReference>
<dbReference type="VEuPathDB" id="FungiDB:TESG_07430"/>
<dbReference type="GO" id="GO:0005576">
    <property type="term" value="C:extracellular region"/>
    <property type="evidence" value="ECO:0007669"/>
    <property type="project" value="UniProtKB-SubCell"/>
</dbReference>
<dbReference type="GO" id="GO:0004181">
    <property type="term" value="F:metallocarboxypeptidase activity"/>
    <property type="evidence" value="ECO:0007669"/>
    <property type="project" value="InterPro"/>
</dbReference>
<dbReference type="GO" id="GO:0008270">
    <property type="term" value="F:zinc ion binding"/>
    <property type="evidence" value="ECO:0007669"/>
    <property type="project" value="InterPro"/>
</dbReference>
<dbReference type="GO" id="GO:0006508">
    <property type="term" value="P:proteolysis"/>
    <property type="evidence" value="ECO:0007669"/>
    <property type="project" value="UniProtKB-KW"/>
</dbReference>
<dbReference type="CDD" id="cd06242">
    <property type="entry name" value="M14-like"/>
    <property type="match status" value="1"/>
</dbReference>
<dbReference type="Gene3D" id="3.40.630.10">
    <property type="entry name" value="Zn peptidases"/>
    <property type="match status" value="1"/>
</dbReference>
<dbReference type="InterPro" id="IPR000834">
    <property type="entry name" value="Peptidase_M14"/>
</dbReference>
<dbReference type="PANTHER" id="PTHR11705:SF83">
    <property type="entry name" value="INACTIVE METALLOCARBOXYPEPTIDASE ECM14"/>
    <property type="match status" value="1"/>
</dbReference>
<dbReference type="PANTHER" id="PTHR11705">
    <property type="entry name" value="PROTEASE FAMILY M14 CARBOXYPEPTIDASE A,B"/>
    <property type="match status" value="1"/>
</dbReference>
<dbReference type="Pfam" id="PF00246">
    <property type="entry name" value="Peptidase_M14"/>
    <property type="match status" value="1"/>
</dbReference>
<dbReference type="SUPFAM" id="SSF53187">
    <property type="entry name" value="Zn-dependent exopeptidases"/>
    <property type="match status" value="1"/>
</dbReference>
<dbReference type="PROSITE" id="PS52035">
    <property type="entry name" value="PEPTIDASE_M14"/>
    <property type="match status" value="1"/>
</dbReference>
<protein>
    <recommendedName>
        <fullName>Carboxypeptidase 2</fullName>
        <ecNumber>3.4.17.-</ecNumber>
    </recommendedName>
    <alternativeName>
        <fullName>Carboxypeptidase M14B</fullName>
    </alternativeName>
    <alternativeName>
        <fullName>Carboxypeptidase MCPB</fullName>
    </alternativeName>
</protein>
<accession>B6V866</accession>
<comment type="function">
    <text evidence="1">Extracellular metalloprotease that contributes to pathogenicity.</text>
</comment>
<comment type="cofactor">
    <cofactor evidence="3">
        <name>Zn(2+)</name>
        <dbReference type="ChEBI" id="CHEBI:29105"/>
    </cofactor>
</comment>
<comment type="subcellular location">
    <subcellularLocation>
        <location evidence="1">Secreted</location>
    </subcellularLocation>
</comment>
<comment type="similarity">
    <text evidence="5">Belongs to the peptidase M14 family.</text>
</comment>
<keyword id="KW-0121">Carboxypeptidase</keyword>
<keyword id="KW-0325">Glycoprotein</keyword>
<keyword id="KW-0378">Hydrolase</keyword>
<keyword id="KW-0645">Protease</keyword>
<keyword id="KW-0964">Secreted</keyword>
<keyword id="KW-0732">Signal</keyword>
<keyword id="KW-0843">Virulence</keyword>
<feature type="signal peptide" evidence="2">
    <location>
        <begin position="1"/>
        <end position="21"/>
    </location>
</feature>
<feature type="chain" id="PRO_0000384112" description="Carboxypeptidase 2">
    <location>
        <begin position="22"/>
        <end position="538"/>
    </location>
</feature>
<feature type="domain" description="Peptidase M14" evidence="3">
    <location>
        <begin position="71"/>
        <end position="351"/>
    </location>
</feature>
<feature type="region of interest" description="Disordered" evidence="4">
    <location>
        <begin position="53"/>
        <end position="76"/>
    </location>
</feature>
<feature type="active site" description="Proton donor/acceptor" evidence="3">
    <location>
        <position position="322"/>
    </location>
</feature>
<feature type="binding site" evidence="3">
    <location>
        <position position="136"/>
    </location>
    <ligand>
        <name>Zn(2+)</name>
        <dbReference type="ChEBI" id="CHEBI:29105"/>
        <note>catalytic</note>
    </ligand>
</feature>
<feature type="binding site" evidence="3">
    <location>
        <position position="139"/>
    </location>
    <ligand>
        <name>Zn(2+)</name>
        <dbReference type="ChEBI" id="CHEBI:29105"/>
        <note>catalytic</note>
    </ligand>
</feature>
<feature type="binding site" evidence="3">
    <location>
        <position position="224"/>
    </location>
    <ligand>
        <name>Zn(2+)</name>
        <dbReference type="ChEBI" id="CHEBI:29105"/>
        <note>catalytic</note>
    </ligand>
</feature>
<feature type="glycosylation site" description="N-linked (GlcNAc...) asparagine" evidence="2">
    <location>
        <position position="46"/>
    </location>
</feature>
<feature type="glycosylation site" description="N-linked (GlcNAc...) asparagine" evidence="2">
    <location>
        <position position="393"/>
    </location>
</feature>
<feature type="glycosylation site" description="N-linked (GlcNAc...) asparagine" evidence="2">
    <location>
        <position position="459"/>
    </location>
</feature>
<reference key="1">
    <citation type="submission" date="2008-10" db="EMBL/GenBank/DDBJ databases">
        <title>Comparing putative pathogenicity factors between Trichophyton tonsurans and Trichophyton equinum.</title>
        <authorList>
            <person name="Preuett B.L."/>
            <person name="Abdel-Rahman S.M."/>
        </authorList>
    </citation>
    <scope>NUCLEOTIDE SEQUENCE [GENOMIC DNA]</scope>
</reference>
<proteinExistence type="inferred from homology"/>
<gene>
    <name type="primary">MCPB</name>
    <name type="synonym">CARB2</name>
</gene>
<name>MCPB_TRITO</name>
<organism>
    <name type="scientific">Trichophyton tonsurans</name>
    <name type="common">Scalp ringworm fungus</name>
    <dbReference type="NCBI Taxonomy" id="34387"/>
    <lineage>
        <taxon>Eukaryota</taxon>
        <taxon>Fungi</taxon>
        <taxon>Dikarya</taxon>
        <taxon>Ascomycota</taxon>
        <taxon>Pezizomycotina</taxon>
        <taxon>Eurotiomycetes</taxon>
        <taxon>Eurotiomycetidae</taxon>
        <taxon>Onygenales</taxon>
        <taxon>Arthrodermataceae</taxon>
        <taxon>Trichophyton</taxon>
    </lineage>
</organism>
<sequence length="538" mass="59949">MVAYRFLTLISLGLGSHCASALQYGYNQVSTHKDSAVVAGAFPAINGTHLQSPAFTSPGTVPRGFSDGTSGPTRDETMEGFMRRLARSNSWMTYHKADFKSEEGRKFPYMYLSASKSSIEKPSSHKLRVWLQGGVHGNEPAGDQSMLALLGDLAANQKWAAKLLEKMDILVLPRYNPDGVFYFQRYLATNFDPNRDHIKLARQQTRDIKELFARFSPHIATDMHEFTAGRAFGPKKDIIYAADALFSSAKNLNIDEGIRQLSEKLFAKRMGKDIEAAGLRWDPYIIQGESSSSKLLLREAGTDAKIGRNAMGLSQCVVFLCETRGIGIADQHFERRTLSGLVMVKSILQTAVDNFDEVYNTIERGIRRFTNSRNDIVLTDRSPIMERTFGMLNTTDATLFDYPIDFATTTPAQAVLTRSRPRAYLIPPSWPDIVKRLEVFGVKADKLPHSYVGPVEALNVTSVTFDKEYYEGVVTTTVETKLVERNIRLPAGSYLVKTNQKNAALAFVALEPENIDSFASFGVIPVSTGDQYPIFRVE</sequence>
<evidence type="ECO:0000250" key="1"/>
<evidence type="ECO:0000255" key="2"/>
<evidence type="ECO:0000255" key="3">
    <source>
        <dbReference type="PROSITE-ProRule" id="PRU01379"/>
    </source>
</evidence>
<evidence type="ECO:0000256" key="4">
    <source>
        <dbReference type="SAM" id="MobiDB-lite"/>
    </source>
</evidence>
<evidence type="ECO:0000305" key="5"/>